<accession>P94543</accession>
<accession>Q795X3</accession>
<protein>
    <recommendedName>
        <fullName>Uncharacterized transmembrane protein YshB</fullName>
    </recommendedName>
</protein>
<organism>
    <name type="scientific">Bacillus subtilis (strain 168)</name>
    <dbReference type="NCBI Taxonomy" id="224308"/>
    <lineage>
        <taxon>Bacteria</taxon>
        <taxon>Bacillati</taxon>
        <taxon>Bacillota</taxon>
        <taxon>Bacilli</taxon>
        <taxon>Bacillales</taxon>
        <taxon>Bacillaceae</taxon>
        <taxon>Bacillus</taxon>
    </lineage>
</organism>
<reference key="1">
    <citation type="journal article" date="1996" name="Microbiology">
        <title>The dnaB-pheA (256 degrees-240 degrees) region of the Bacillus subtilis chromosome containing genes responsible for stress responses, the utilization of plant cell walls and primary metabolism.</title>
        <authorList>
            <person name="Wipat A."/>
            <person name="Carter N."/>
            <person name="Brignell C.S."/>
            <person name="Guy J.B."/>
            <person name="Piper K."/>
            <person name="Sanders J."/>
            <person name="Emmerson P.T."/>
            <person name="Harwood C.R."/>
        </authorList>
    </citation>
    <scope>NUCLEOTIDE SEQUENCE [GENOMIC DNA]</scope>
    <source>
        <strain>168</strain>
    </source>
</reference>
<reference key="2">
    <citation type="journal article" date="1997" name="Nature">
        <title>The complete genome sequence of the Gram-positive bacterium Bacillus subtilis.</title>
        <authorList>
            <person name="Kunst F."/>
            <person name="Ogasawara N."/>
            <person name="Moszer I."/>
            <person name="Albertini A.M."/>
            <person name="Alloni G."/>
            <person name="Azevedo V."/>
            <person name="Bertero M.G."/>
            <person name="Bessieres P."/>
            <person name="Bolotin A."/>
            <person name="Borchert S."/>
            <person name="Borriss R."/>
            <person name="Boursier L."/>
            <person name="Brans A."/>
            <person name="Braun M."/>
            <person name="Brignell S.C."/>
            <person name="Bron S."/>
            <person name="Brouillet S."/>
            <person name="Bruschi C.V."/>
            <person name="Caldwell B."/>
            <person name="Capuano V."/>
            <person name="Carter N.M."/>
            <person name="Choi S.-K."/>
            <person name="Codani J.-J."/>
            <person name="Connerton I.F."/>
            <person name="Cummings N.J."/>
            <person name="Daniel R.A."/>
            <person name="Denizot F."/>
            <person name="Devine K.M."/>
            <person name="Duesterhoeft A."/>
            <person name="Ehrlich S.D."/>
            <person name="Emmerson P.T."/>
            <person name="Entian K.-D."/>
            <person name="Errington J."/>
            <person name="Fabret C."/>
            <person name="Ferrari E."/>
            <person name="Foulger D."/>
            <person name="Fritz C."/>
            <person name="Fujita M."/>
            <person name="Fujita Y."/>
            <person name="Fuma S."/>
            <person name="Galizzi A."/>
            <person name="Galleron N."/>
            <person name="Ghim S.-Y."/>
            <person name="Glaser P."/>
            <person name="Goffeau A."/>
            <person name="Golightly E.J."/>
            <person name="Grandi G."/>
            <person name="Guiseppi G."/>
            <person name="Guy B.J."/>
            <person name="Haga K."/>
            <person name="Haiech J."/>
            <person name="Harwood C.R."/>
            <person name="Henaut A."/>
            <person name="Hilbert H."/>
            <person name="Holsappel S."/>
            <person name="Hosono S."/>
            <person name="Hullo M.-F."/>
            <person name="Itaya M."/>
            <person name="Jones L.-M."/>
            <person name="Joris B."/>
            <person name="Karamata D."/>
            <person name="Kasahara Y."/>
            <person name="Klaerr-Blanchard M."/>
            <person name="Klein C."/>
            <person name="Kobayashi Y."/>
            <person name="Koetter P."/>
            <person name="Koningstein G."/>
            <person name="Krogh S."/>
            <person name="Kumano M."/>
            <person name="Kurita K."/>
            <person name="Lapidus A."/>
            <person name="Lardinois S."/>
            <person name="Lauber J."/>
            <person name="Lazarevic V."/>
            <person name="Lee S.-M."/>
            <person name="Levine A."/>
            <person name="Liu H."/>
            <person name="Masuda S."/>
            <person name="Mauel C."/>
            <person name="Medigue C."/>
            <person name="Medina N."/>
            <person name="Mellado R.P."/>
            <person name="Mizuno M."/>
            <person name="Moestl D."/>
            <person name="Nakai S."/>
            <person name="Noback M."/>
            <person name="Noone D."/>
            <person name="O'Reilly M."/>
            <person name="Ogawa K."/>
            <person name="Ogiwara A."/>
            <person name="Oudega B."/>
            <person name="Park S.-H."/>
            <person name="Parro V."/>
            <person name="Pohl T.M."/>
            <person name="Portetelle D."/>
            <person name="Porwollik S."/>
            <person name="Prescott A.M."/>
            <person name="Presecan E."/>
            <person name="Pujic P."/>
            <person name="Purnelle B."/>
            <person name="Rapoport G."/>
            <person name="Rey M."/>
            <person name="Reynolds S."/>
            <person name="Rieger M."/>
            <person name="Rivolta C."/>
            <person name="Rocha E."/>
            <person name="Roche B."/>
            <person name="Rose M."/>
            <person name="Sadaie Y."/>
            <person name="Sato T."/>
            <person name="Scanlan E."/>
            <person name="Schleich S."/>
            <person name="Schroeter R."/>
            <person name="Scoffone F."/>
            <person name="Sekiguchi J."/>
            <person name="Sekowska A."/>
            <person name="Seror S.J."/>
            <person name="Serror P."/>
            <person name="Shin B.-S."/>
            <person name="Soldo B."/>
            <person name="Sorokin A."/>
            <person name="Tacconi E."/>
            <person name="Takagi T."/>
            <person name="Takahashi H."/>
            <person name="Takemaru K."/>
            <person name="Takeuchi M."/>
            <person name="Tamakoshi A."/>
            <person name="Tanaka T."/>
            <person name="Terpstra P."/>
            <person name="Tognoni A."/>
            <person name="Tosato V."/>
            <person name="Uchiyama S."/>
            <person name="Vandenbol M."/>
            <person name="Vannier F."/>
            <person name="Vassarotti A."/>
            <person name="Viari A."/>
            <person name="Wambutt R."/>
            <person name="Wedler E."/>
            <person name="Wedler H."/>
            <person name="Weitzenegger T."/>
            <person name="Winters P."/>
            <person name="Wipat A."/>
            <person name="Yamamoto H."/>
            <person name="Yamane K."/>
            <person name="Yasumoto K."/>
            <person name="Yata K."/>
            <person name="Yoshida K."/>
            <person name="Yoshikawa H.-F."/>
            <person name="Zumstein E."/>
            <person name="Yoshikawa H."/>
            <person name="Danchin A."/>
        </authorList>
    </citation>
    <scope>NUCLEOTIDE SEQUENCE [LARGE SCALE GENOMIC DNA]</scope>
    <source>
        <strain>168</strain>
    </source>
</reference>
<gene>
    <name type="primary">yshB</name>
    <name type="ordered locus">BSU28600</name>
</gene>
<keyword id="KW-1003">Cell membrane</keyword>
<keyword id="KW-0472">Membrane</keyword>
<keyword id="KW-1185">Reference proteome</keyword>
<keyword id="KW-0812">Transmembrane</keyword>
<keyword id="KW-1133">Transmembrane helix</keyword>
<sequence>MLDIIILILLLMGTLLGLKRGFILQFIRLTSFILSIAFAALFYKNVAPHLHWIPAPDFSAGQPALSFFTGNLEAAYYNAIAFIVLFIIAKILLRIIGSFLSIVAGIPVIKQINQMLGAVLGFLEVYLFTFVLLYVASVLPVDALQQMMGQSSLANVIINHTPYLSGLLQELWTQYGA</sequence>
<evidence type="ECO:0000255" key="1"/>
<evidence type="ECO:0000305" key="2"/>
<proteinExistence type="predicted"/>
<feature type="chain" id="PRO_0000360724" description="Uncharacterized transmembrane protein YshB">
    <location>
        <begin position="1"/>
        <end position="177"/>
    </location>
</feature>
<feature type="transmembrane region" description="Helical" evidence="1">
    <location>
        <begin position="4"/>
        <end position="24"/>
    </location>
</feature>
<feature type="transmembrane region" description="Helical" evidence="1">
    <location>
        <begin position="33"/>
        <end position="53"/>
    </location>
</feature>
<feature type="transmembrane region" description="Helical" evidence="1">
    <location>
        <begin position="80"/>
        <end position="100"/>
    </location>
</feature>
<feature type="transmembrane region" description="Helical" evidence="1">
    <location>
        <begin position="115"/>
        <end position="135"/>
    </location>
</feature>
<name>YSHB_BACSU</name>
<dbReference type="EMBL" id="Z75208">
    <property type="protein sequence ID" value="CAA99567.1"/>
    <property type="molecule type" value="Genomic_DNA"/>
</dbReference>
<dbReference type="EMBL" id="AL009126">
    <property type="protein sequence ID" value="CAB14820.1"/>
    <property type="molecule type" value="Genomic_DNA"/>
</dbReference>
<dbReference type="PIR" id="B69985">
    <property type="entry name" value="B69985"/>
</dbReference>
<dbReference type="RefSeq" id="NP_390738.1">
    <property type="nucleotide sequence ID" value="NC_000964.3"/>
</dbReference>
<dbReference type="RefSeq" id="WP_003229537.1">
    <property type="nucleotide sequence ID" value="NZ_OZ025638.1"/>
</dbReference>
<dbReference type="FunCoup" id="P94543">
    <property type="interactions" value="35"/>
</dbReference>
<dbReference type="STRING" id="224308.BSU28600"/>
<dbReference type="PaxDb" id="224308-BSU28600"/>
<dbReference type="EnsemblBacteria" id="CAB14820">
    <property type="protein sequence ID" value="CAB14820"/>
    <property type="gene ID" value="BSU_28600"/>
</dbReference>
<dbReference type="GeneID" id="937446"/>
<dbReference type="KEGG" id="bsu:BSU28600"/>
<dbReference type="PATRIC" id="fig|224308.179.peg.3107"/>
<dbReference type="eggNOG" id="COG1286">
    <property type="taxonomic scope" value="Bacteria"/>
</dbReference>
<dbReference type="InParanoid" id="P94543"/>
<dbReference type="OrthoDB" id="1809613at2"/>
<dbReference type="PhylomeDB" id="P94543"/>
<dbReference type="BioCyc" id="BSUB:BSU28600-MONOMER"/>
<dbReference type="Proteomes" id="UP000001570">
    <property type="component" value="Chromosome"/>
</dbReference>
<dbReference type="GO" id="GO:0005886">
    <property type="term" value="C:plasma membrane"/>
    <property type="evidence" value="ECO:0007669"/>
    <property type="project" value="UniProtKB-SubCell"/>
</dbReference>
<dbReference type="GO" id="GO:0009403">
    <property type="term" value="P:toxin biosynthetic process"/>
    <property type="evidence" value="ECO:0007669"/>
    <property type="project" value="InterPro"/>
</dbReference>
<dbReference type="InterPro" id="IPR003825">
    <property type="entry name" value="Colicin-V_CvpA"/>
</dbReference>
<dbReference type="PANTHER" id="PTHR37306">
    <property type="entry name" value="COLICIN V PRODUCTION PROTEIN"/>
    <property type="match status" value="1"/>
</dbReference>
<dbReference type="PANTHER" id="PTHR37306:SF1">
    <property type="entry name" value="COLICIN V PRODUCTION PROTEIN"/>
    <property type="match status" value="1"/>
</dbReference>
<dbReference type="Pfam" id="PF02674">
    <property type="entry name" value="Colicin_V"/>
    <property type="match status" value="1"/>
</dbReference>
<comment type="subcellular location">
    <subcellularLocation>
        <location evidence="2">Cell membrane</location>
        <topology evidence="2">Multi-pass membrane protein</topology>
    </subcellularLocation>
</comment>